<accession>Q0WR59</accession>
<accession>Q8VYQ5</accession>
<accession>Q9LEA2</accession>
<protein>
    <recommendedName>
        <fullName>Probable inactive receptor kinase At5g10020</fullName>
    </recommendedName>
</protein>
<gene>
    <name type="ordered locus">At5g10020</name>
    <name type="ORF">T31P16.10</name>
    <name type="ORF">T31P16_9</name>
</gene>
<reference key="1">
    <citation type="journal article" date="2000" name="Nature">
        <title>Sequence and analysis of chromosome 5 of the plant Arabidopsis thaliana.</title>
        <authorList>
            <person name="Tabata S."/>
            <person name="Kaneko T."/>
            <person name="Nakamura Y."/>
            <person name="Kotani H."/>
            <person name="Kato T."/>
            <person name="Asamizu E."/>
            <person name="Miyajima N."/>
            <person name="Sasamoto S."/>
            <person name="Kimura T."/>
            <person name="Hosouchi T."/>
            <person name="Kawashima K."/>
            <person name="Kohara M."/>
            <person name="Matsumoto M."/>
            <person name="Matsuno A."/>
            <person name="Muraki A."/>
            <person name="Nakayama S."/>
            <person name="Nakazaki N."/>
            <person name="Naruo K."/>
            <person name="Okumura S."/>
            <person name="Shinpo S."/>
            <person name="Takeuchi C."/>
            <person name="Wada T."/>
            <person name="Watanabe A."/>
            <person name="Yamada M."/>
            <person name="Yasuda M."/>
            <person name="Sato S."/>
            <person name="de la Bastide M."/>
            <person name="Huang E."/>
            <person name="Spiegel L."/>
            <person name="Gnoj L."/>
            <person name="O'Shaughnessy A."/>
            <person name="Preston R."/>
            <person name="Habermann K."/>
            <person name="Murray J."/>
            <person name="Johnson D."/>
            <person name="Rohlfing T."/>
            <person name="Nelson J."/>
            <person name="Stoneking T."/>
            <person name="Pepin K."/>
            <person name="Spieth J."/>
            <person name="Sekhon M."/>
            <person name="Armstrong J."/>
            <person name="Becker M."/>
            <person name="Belter E."/>
            <person name="Cordum H."/>
            <person name="Cordes M."/>
            <person name="Courtney L."/>
            <person name="Courtney W."/>
            <person name="Dante M."/>
            <person name="Du H."/>
            <person name="Edwards J."/>
            <person name="Fryman J."/>
            <person name="Haakensen B."/>
            <person name="Lamar E."/>
            <person name="Latreille P."/>
            <person name="Leonard S."/>
            <person name="Meyer R."/>
            <person name="Mulvaney E."/>
            <person name="Ozersky P."/>
            <person name="Riley A."/>
            <person name="Strowmatt C."/>
            <person name="Wagner-McPherson C."/>
            <person name="Wollam A."/>
            <person name="Yoakum M."/>
            <person name="Bell M."/>
            <person name="Dedhia N."/>
            <person name="Parnell L."/>
            <person name="Shah R."/>
            <person name="Rodriguez M."/>
            <person name="Hoon See L."/>
            <person name="Vil D."/>
            <person name="Baker J."/>
            <person name="Kirchoff K."/>
            <person name="Toth K."/>
            <person name="King L."/>
            <person name="Bahret A."/>
            <person name="Miller B."/>
            <person name="Marra M.A."/>
            <person name="Martienssen R."/>
            <person name="McCombie W.R."/>
            <person name="Wilson R.K."/>
            <person name="Murphy G."/>
            <person name="Bancroft I."/>
            <person name="Volckaert G."/>
            <person name="Wambutt R."/>
            <person name="Duesterhoeft A."/>
            <person name="Stiekema W."/>
            <person name="Pohl T."/>
            <person name="Entian K.-D."/>
            <person name="Terryn N."/>
            <person name="Hartley N."/>
            <person name="Bent E."/>
            <person name="Johnson S."/>
            <person name="Langham S.-A."/>
            <person name="McCullagh B."/>
            <person name="Robben J."/>
            <person name="Grymonprez B."/>
            <person name="Zimmermann W."/>
            <person name="Ramsperger U."/>
            <person name="Wedler H."/>
            <person name="Balke K."/>
            <person name="Wedler E."/>
            <person name="Peters S."/>
            <person name="van Staveren M."/>
            <person name="Dirkse W."/>
            <person name="Mooijman P."/>
            <person name="Klein Lankhorst R."/>
            <person name="Weitzenegger T."/>
            <person name="Bothe G."/>
            <person name="Rose M."/>
            <person name="Hauf J."/>
            <person name="Berneiser S."/>
            <person name="Hempel S."/>
            <person name="Feldpausch M."/>
            <person name="Lamberth S."/>
            <person name="Villarroel R."/>
            <person name="Gielen J."/>
            <person name="Ardiles W."/>
            <person name="Bents O."/>
            <person name="Lemcke K."/>
            <person name="Kolesov G."/>
            <person name="Mayer K.F.X."/>
            <person name="Rudd S."/>
            <person name="Schoof H."/>
            <person name="Schueller C."/>
            <person name="Zaccaria P."/>
            <person name="Mewes H.-W."/>
            <person name="Bevan M."/>
            <person name="Fransz P.F."/>
        </authorList>
    </citation>
    <scope>NUCLEOTIDE SEQUENCE [LARGE SCALE GENOMIC DNA]</scope>
    <source>
        <strain>cv. Columbia</strain>
    </source>
</reference>
<reference key="2">
    <citation type="journal article" date="2017" name="Plant J.">
        <title>Araport11: a complete reannotation of the Arabidopsis thaliana reference genome.</title>
        <authorList>
            <person name="Cheng C.Y."/>
            <person name="Krishnakumar V."/>
            <person name="Chan A.P."/>
            <person name="Thibaud-Nissen F."/>
            <person name="Schobel S."/>
            <person name="Town C.D."/>
        </authorList>
    </citation>
    <scope>GENOME REANNOTATION</scope>
    <source>
        <strain>cv. Columbia</strain>
    </source>
</reference>
<reference key="3">
    <citation type="journal article" date="2003" name="Science">
        <title>Empirical analysis of transcriptional activity in the Arabidopsis genome.</title>
        <authorList>
            <person name="Yamada K."/>
            <person name="Lim J."/>
            <person name="Dale J.M."/>
            <person name="Chen H."/>
            <person name="Shinn P."/>
            <person name="Palm C.J."/>
            <person name="Southwick A.M."/>
            <person name="Wu H.C."/>
            <person name="Kim C.J."/>
            <person name="Nguyen M."/>
            <person name="Pham P.K."/>
            <person name="Cheuk R.F."/>
            <person name="Karlin-Newmann G."/>
            <person name="Liu S.X."/>
            <person name="Lam B."/>
            <person name="Sakano H."/>
            <person name="Wu T."/>
            <person name="Yu G."/>
            <person name="Miranda M."/>
            <person name="Quach H.L."/>
            <person name="Tripp M."/>
            <person name="Chang C.H."/>
            <person name="Lee J.M."/>
            <person name="Toriumi M.J."/>
            <person name="Chan M.M."/>
            <person name="Tang C.C."/>
            <person name="Onodera C.S."/>
            <person name="Deng J.M."/>
            <person name="Akiyama K."/>
            <person name="Ansari Y."/>
            <person name="Arakawa T."/>
            <person name="Banh J."/>
            <person name="Banno F."/>
            <person name="Bowser L."/>
            <person name="Brooks S.Y."/>
            <person name="Carninci P."/>
            <person name="Chao Q."/>
            <person name="Choy N."/>
            <person name="Enju A."/>
            <person name="Goldsmith A.D."/>
            <person name="Gurjal M."/>
            <person name="Hansen N.F."/>
            <person name="Hayashizaki Y."/>
            <person name="Johnson-Hopson C."/>
            <person name="Hsuan V.W."/>
            <person name="Iida K."/>
            <person name="Karnes M."/>
            <person name="Khan S."/>
            <person name="Koesema E."/>
            <person name="Ishida J."/>
            <person name="Jiang P.X."/>
            <person name="Jones T."/>
            <person name="Kawai J."/>
            <person name="Kamiya A."/>
            <person name="Meyers C."/>
            <person name="Nakajima M."/>
            <person name="Narusaka M."/>
            <person name="Seki M."/>
            <person name="Sakurai T."/>
            <person name="Satou M."/>
            <person name="Tamse R."/>
            <person name="Vaysberg M."/>
            <person name="Wallender E.K."/>
            <person name="Wong C."/>
            <person name="Yamamura Y."/>
            <person name="Yuan S."/>
            <person name="Shinozaki K."/>
            <person name="Davis R.W."/>
            <person name="Theologis A."/>
            <person name="Ecker J.R."/>
        </authorList>
    </citation>
    <scope>NUCLEOTIDE SEQUENCE [LARGE SCALE MRNA] (ISOFORM 1)</scope>
    <source>
        <strain>cv. Columbia</strain>
    </source>
</reference>
<reference key="4">
    <citation type="submission" date="2006-07" db="EMBL/GenBank/DDBJ databases">
        <title>Large-scale analysis of RIKEN Arabidopsis full-length (RAFL) cDNAs.</title>
        <authorList>
            <person name="Totoki Y."/>
            <person name="Seki M."/>
            <person name="Ishida J."/>
            <person name="Nakajima M."/>
            <person name="Enju A."/>
            <person name="Kamiya A."/>
            <person name="Narusaka M."/>
            <person name="Shin-i T."/>
            <person name="Nakagawa M."/>
            <person name="Sakamoto N."/>
            <person name="Oishi K."/>
            <person name="Kohara Y."/>
            <person name="Kobayashi M."/>
            <person name="Toyoda A."/>
            <person name="Sakaki Y."/>
            <person name="Sakurai T."/>
            <person name="Iida K."/>
            <person name="Akiyama K."/>
            <person name="Satou M."/>
            <person name="Toyoda T."/>
            <person name="Konagaya A."/>
            <person name="Carninci P."/>
            <person name="Kawai J."/>
            <person name="Hayashizaki Y."/>
            <person name="Shinozaki K."/>
        </authorList>
    </citation>
    <scope>NUCLEOTIDE SEQUENCE [LARGE SCALE MRNA] (ISOFORM 2)</scope>
    <source>
        <strain>cv. Columbia</strain>
    </source>
</reference>
<reference key="5">
    <citation type="journal article" date="2004" name="Plant Cell">
        <title>Phosphoproteomics of the Arabidopsis plasma membrane and a new phosphorylation site database.</title>
        <authorList>
            <person name="Nuehse T.S."/>
            <person name="Stensballe A."/>
            <person name="Jensen O.N."/>
            <person name="Peck S.C."/>
        </authorList>
    </citation>
    <scope>IDENTIFICATION BY MASS SPECTROMETRY [LARGE SCALE ANALYSIS]</scope>
</reference>
<reference key="6">
    <citation type="journal article" date="2007" name="Mol. Cell. Proteomics">
        <title>Temporal analysis of sucrose-induced phosphorylation changes in plasma membrane proteins of Arabidopsis.</title>
        <authorList>
            <person name="Niittylae T."/>
            <person name="Fuglsang A.T."/>
            <person name="Palmgren M.G."/>
            <person name="Frommer W.B."/>
            <person name="Schulze W.X."/>
        </authorList>
    </citation>
    <scope>PHOSPHORYLATION [LARGE SCALE ANALYSIS] AT SER-744</scope>
    <scope>IDENTIFICATION BY MASS SPECTROMETRY [LARGE SCALE ANALYSIS]</scope>
    <source>
        <tissue>Seedling</tissue>
    </source>
</reference>
<reference key="7">
    <citation type="journal article" date="2008" name="J. Proteome Res.">
        <title>Site-specific phosphorylation profiling of Arabidopsis proteins by mass spectrometry and peptide chip analysis.</title>
        <authorList>
            <person name="de la Fuente van Bentem S."/>
            <person name="Anrather D."/>
            <person name="Dohnal I."/>
            <person name="Roitinger E."/>
            <person name="Csaszar E."/>
            <person name="Joore J."/>
            <person name="Buijnink J."/>
            <person name="Carreri A."/>
            <person name="Forzani C."/>
            <person name="Lorkovic Z.J."/>
            <person name="Barta A."/>
            <person name="Lecourieux D."/>
            <person name="Verhounig A."/>
            <person name="Jonak C."/>
            <person name="Hirt H."/>
        </authorList>
    </citation>
    <scope>PHOSPHORYLATION [LARGE SCALE ANALYSIS] AT SER-744</scope>
    <scope>IDENTIFICATION BY MASS SPECTROMETRY [LARGE SCALE ANALYSIS]</scope>
    <source>
        <tissue>Root</tissue>
    </source>
</reference>
<reference key="8">
    <citation type="journal article" date="2009" name="Plant Physiol.">
        <title>Large-scale Arabidopsis phosphoproteome profiling reveals novel chloroplast kinase substrates and phosphorylation networks.</title>
        <authorList>
            <person name="Reiland S."/>
            <person name="Messerli G."/>
            <person name="Baerenfaller K."/>
            <person name="Gerrits B."/>
            <person name="Endler A."/>
            <person name="Grossmann J."/>
            <person name="Gruissem W."/>
            <person name="Baginsky S."/>
        </authorList>
    </citation>
    <scope>IDENTIFICATION BY MASS SPECTROMETRY [LARGE SCALE ANALYSIS]</scope>
</reference>
<keyword id="KW-0025">Alternative splicing</keyword>
<keyword id="KW-0067">ATP-binding</keyword>
<keyword id="KW-0433">Leucine-rich repeat</keyword>
<keyword id="KW-0472">Membrane</keyword>
<keyword id="KW-0547">Nucleotide-binding</keyword>
<keyword id="KW-0597">Phosphoprotein</keyword>
<keyword id="KW-0675">Receptor</keyword>
<keyword id="KW-1185">Reference proteome</keyword>
<keyword id="KW-0677">Repeat</keyword>
<keyword id="KW-0732">Signal</keyword>
<keyword id="KW-0812">Transmembrane</keyword>
<keyword id="KW-1133">Transmembrane helix</keyword>
<dbReference type="EMBL" id="AL356332">
    <property type="protein sequence ID" value="CAB92043.1"/>
    <property type="molecule type" value="Genomic_DNA"/>
</dbReference>
<dbReference type="EMBL" id="CP002688">
    <property type="protein sequence ID" value="AED91482.1"/>
    <property type="molecule type" value="Genomic_DNA"/>
</dbReference>
<dbReference type="EMBL" id="CP002688">
    <property type="protein sequence ID" value="AED91483.1"/>
    <property type="molecule type" value="Genomic_DNA"/>
</dbReference>
<dbReference type="EMBL" id="AY070134">
    <property type="protein sequence ID" value="AAL47484.1"/>
    <property type="molecule type" value="mRNA"/>
</dbReference>
<dbReference type="EMBL" id="AK228463">
    <property type="protein sequence ID" value="BAF00390.1"/>
    <property type="molecule type" value="mRNA"/>
</dbReference>
<dbReference type="PIR" id="T50006">
    <property type="entry name" value="T50006"/>
</dbReference>
<dbReference type="RefSeq" id="NP_001078562.1">
    <molecule id="Q0WR59-2"/>
    <property type="nucleotide sequence ID" value="NM_001085093.2"/>
</dbReference>
<dbReference type="RefSeq" id="NP_196564.1">
    <molecule id="Q0WR59-1"/>
    <property type="nucleotide sequence ID" value="NM_121040.4"/>
</dbReference>
<dbReference type="SMR" id="Q0WR59"/>
<dbReference type="BioGRID" id="16143">
    <property type="interactions" value="29"/>
</dbReference>
<dbReference type="FunCoup" id="Q0WR59">
    <property type="interactions" value="1861"/>
</dbReference>
<dbReference type="IntAct" id="Q0WR59">
    <property type="interactions" value="32"/>
</dbReference>
<dbReference type="STRING" id="3702.Q0WR59"/>
<dbReference type="iPTMnet" id="Q0WR59"/>
<dbReference type="PaxDb" id="3702-AT5G10020.1"/>
<dbReference type="ProteomicsDB" id="243042">
    <molecule id="Q0WR59-1"/>
</dbReference>
<dbReference type="EnsemblPlants" id="AT5G10020.1">
    <molecule id="Q0WR59-1"/>
    <property type="protein sequence ID" value="AT5G10020.1"/>
    <property type="gene ID" value="AT5G10020"/>
</dbReference>
<dbReference type="EnsemblPlants" id="AT5G10020.2">
    <molecule id="Q0WR59-2"/>
    <property type="protein sequence ID" value="AT5G10020.2"/>
    <property type="gene ID" value="AT5G10020"/>
</dbReference>
<dbReference type="GeneID" id="830865"/>
<dbReference type="Gramene" id="AT5G10020.1">
    <molecule id="Q0WR59-1"/>
    <property type="protein sequence ID" value="AT5G10020.1"/>
    <property type="gene ID" value="AT5G10020"/>
</dbReference>
<dbReference type="Gramene" id="AT5G10020.2">
    <molecule id="Q0WR59-2"/>
    <property type="protein sequence ID" value="AT5G10020.2"/>
    <property type="gene ID" value="AT5G10020"/>
</dbReference>
<dbReference type="KEGG" id="ath:AT5G10020"/>
<dbReference type="Araport" id="AT5G10020"/>
<dbReference type="TAIR" id="AT5G10020">
    <property type="gene designation" value="SIRK1"/>
</dbReference>
<dbReference type="eggNOG" id="ENOG502QWF1">
    <property type="taxonomic scope" value="Eukaryota"/>
</dbReference>
<dbReference type="HOGENOM" id="CLU_000288_22_1_1"/>
<dbReference type="InParanoid" id="Q0WR59"/>
<dbReference type="OMA" id="VMDCIDR"/>
<dbReference type="OrthoDB" id="5789657at2759"/>
<dbReference type="PhylomeDB" id="Q0WR59"/>
<dbReference type="PRO" id="PR:Q0WR59"/>
<dbReference type="Proteomes" id="UP000006548">
    <property type="component" value="Chromosome 5"/>
</dbReference>
<dbReference type="ExpressionAtlas" id="Q0WR59">
    <property type="expression patterns" value="baseline and differential"/>
</dbReference>
<dbReference type="GO" id="GO:0005886">
    <property type="term" value="C:plasma membrane"/>
    <property type="evidence" value="ECO:0007005"/>
    <property type="project" value="TAIR"/>
</dbReference>
<dbReference type="GO" id="GO:0005524">
    <property type="term" value="F:ATP binding"/>
    <property type="evidence" value="ECO:0007669"/>
    <property type="project" value="UniProtKB-KW"/>
</dbReference>
<dbReference type="GO" id="GO:0004672">
    <property type="term" value="F:protein kinase activity"/>
    <property type="evidence" value="ECO:0007669"/>
    <property type="project" value="InterPro"/>
</dbReference>
<dbReference type="FunFam" id="3.80.10.10:FF:000383">
    <property type="entry name" value="Leucine-rich repeat receptor protein kinase EMS1"/>
    <property type="match status" value="1"/>
</dbReference>
<dbReference type="FunFam" id="3.30.200.20:FF:000486">
    <property type="entry name" value="Leucine-rich repeat receptor-like protein kinase"/>
    <property type="match status" value="1"/>
</dbReference>
<dbReference type="FunFam" id="3.80.10.10:FF:000095">
    <property type="entry name" value="LRR receptor-like serine/threonine-protein kinase GSO1"/>
    <property type="match status" value="1"/>
</dbReference>
<dbReference type="FunFam" id="3.80.10.10:FF:000400">
    <property type="entry name" value="Nuclear pore complex protein NUP107"/>
    <property type="match status" value="1"/>
</dbReference>
<dbReference type="FunFam" id="1.10.510.10:FF:000480">
    <property type="entry name" value="Pollen receptor-like kinase 1"/>
    <property type="match status" value="1"/>
</dbReference>
<dbReference type="Gene3D" id="3.30.200.20">
    <property type="entry name" value="Phosphorylase Kinase, domain 1"/>
    <property type="match status" value="1"/>
</dbReference>
<dbReference type="Gene3D" id="3.80.10.10">
    <property type="entry name" value="Ribonuclease Inhibitor"/>
    <property type="match status" value="2"/>
</dbReference>
<dbReference type="Gene3D" id="1.10.510.10">
    <property type="entry name" value="Transferase(Phosphotransferase) domain 1"/>
    <property type="match status" value="1"/>
</dbReference>
<dbReference type="InterPro" id="IPR053059">
    <property type="entry name" value="Inactive_SerThr-Kinase_ABA"/>
</dbReference>
<dbReference type="InterPro" id="IPR011009">
    <property type="entry name" value="Kinase-like_dom_sf"/>
</dbReference>
<dbReference type="InterPro" id="IPR001611">
    <property type="entry name" value="Leu-rich_rpt"/>
</dbReference>
<dbReference type="InterPro" id="IPR032675">
    <property type="entry name" value="LRR_dom_sf"/>
</dbReference>
<dbReference type="InterPro" id="IPR013210">
    <property type="entry name" value="LRR_N_plant-typ"/>
</dbReference>
<dbReference type="InterPro" id="IPR000719">
    <property type="entry name" value="Prot_kinase_dom"/>
</dbReference>
<dbReference type="PANTHER" id="PTHR48003">
    <property type="entry name" value="OS07G0626500 PROTEIN"/>
    <property type="match status" value="1"/>
</dbReference>
<dbReference type="PANTHER" id="PTHR48003:SF5">
    <property type="entry name" value="OS07G0626500 PROTEIN"/>
    <property type="match status" value="1"/>
</dbReference>
<dbReference type="Pfam" id="PF00560">
    <property type="entry name" value="LRR_1"/>
    <property type="match status" value="5"/>
</dbReference>
<dbReference type="Pfam" id="PF13516">
    <property type="entry name" value="LRR_6"/>
    <property type="match status" value="1"/>
</dbReference>
<dbReference type="Pfam" id="PF13855">
    <property type="entry name" value="LRR_8"/>
    <property type="match status" value="1"/>
</dbReference>
<dbReference type="Pfam" id="PF08263">
    <property type="entry name" value="LRRNT_2"/>
    <property type="match status" value="1"/>
</dbReference>
<dbReference type="Pfam" id="PF00069">
    <property type="entry name" value="Pkinase"/>
    <property type="match status" value="1"/>
</dbReference>
<dbReference type="SUPFAM" id="SSF52058">
    <property type="entry name" value="L domain-like"/>
    <property type="match status" value="2"/>
</dbReference>
<dbReference type="SUPFAM" id="SSF56112">
    <property type="entry name" value="Protein kinase-like (PK-like)"/>
    <property type="match status" value="1"/>
</dbReference>
<dbReference type="PROSITE" id="PS50011">
    <property type="entry name" value="PROTEIN_KINASE_DOM"/>
    <property type="match status" value="1"/>
</dbReference>
<proteinExistence type="evidence at protein level"/>
<organism>
    <name type="scientific">Arabidopsis thaliana</name>
    <name type="common">Mouse-ear cress</name>
    <dbReference type="NCBI Taxonomy" id="3702"/>
    <lineage>
        <taxon>Eukaryota</taxon>
        <taxon>Viridiplantae</taxon>
        <taxon>Streptophyta</taxon>
        <taxon>Embryophyta</taxon>
        <taxon>Tracheophyta</taxon>
        <taxon>Spermatophyta</taxon>
        <taxon>Magnoliopsida</taxon>
        <taxon>eudicotyledons</taxon>
        <taxon>Gunneridae</taxon>
        <taxon>Pentapetalae</taxon>
        <taxon>rosids</taxon>
        <taxon>malvids</taxon>
        <taxon>Brassicales</taxon>
        <taxon>Brassicaceae</taxon>
        <taxon>Camelineae</taxon>
        <taxon>Arabidopsis</taxon>
    </lineage>
</organism>
<feature type="signal peptide" evidence="1">
    <location>
        <begin position="1"/>
        <end position="21"/>
    </location>
</feature>
<feature type="chain" id="PRO_0000343175" description="Probable inactive receptor kinase At5g10020">
    <location>
        <begin position="22"/>
        <end position="1048"/>
    </location>
</feature>
<feature type="transmembrane region" description="Helical" evidence="1">
    <location>
        <begin position="602"/>
        <end position="622"/>
    </location>
</feature>
<feature type="repeat" description="LRR 1">
    <location>
        <begin position="100"/>
        <end position="120"/>
    </location>
</feature>
<feature type="repeat" description="LRR 2">
    <location>
        <begin position="124"/>
        <end position="146"/>
    </location>
</feature>
<feature type="repeat" description="LRR 3">
    <location>
        <begin position="148"/>
        <end position="169"/>
    </location>
</feature>
<feature type="repeat" description="LRR 4">
    <location>
        <begin position="172"/>
        <end position="194"/>
    </location>
</feature>
<feature type="repeat" description="LRR 5">
    <location>
        <begin position="196"/>
        <end position="217"/>
    </location>
</feature>
<feature type="repeat" description="LRR 6">
    <location>
        <begin position="224"/>
        <end position="246"/>
    </location>
</feature>
<feature type="repeat" description="LRR 7">
    <location>
        <begin position="250"/>
        <end position="272"/>
    </location>
</feature>
<feature type="repeat" description="LRR 8">
    <location>
        <begin position="273"/>
        <end position="294"/>
    </location>
</feature>
<feature type="repeat" description="LRR 9">
    <location>
        <begin position="298"/>
        <end position="319"/>
    </location>
</feature>
<feature type="repeat" description="LRR 10">
    <location>
        <begin position="320"/>
        <end position="342"/>
    </location>
</feature>
<feature type="repeat" description="LRR 11">
    <location>
        <begin position="365"/>
        <end position="387"/>
    </location>
</feature>
<feature type="repeat" description="LRR 12">
    <location>
        <begin position="389"/>
        <end position="411"/>
    </location>
</feature>
<feature type="repeat" description="LRR 13">
    <location>
        <begin position="412"/>
        <end position="433"/>
    </location>
</feature>
<feature type="repeat" description="LRR 14">
    <location>
        <begin position="436"/>
        <end position="457"/>
    </location>
</feature>
<feature type="repeat" description="LRR 15">
    <location>
        <begin position="469"/>
        <end position="491"/>
    </location>
</feature>
<feature type="repeat" description="LRR 16">
    <location>
        <begin position="493"/>
        <end position="516"/>
    </location>
</feature>
<feature type="repeat" description="LRR 17">
    <location>
        <begin position="517"/>
        <end position="539"/>
    </location>
</feature>
<feature type="repeat" description="LRR 18">
    <location>
        <begin position="540"/>
        <end position="560"/>
    </location>
</feature>
<feature type="domain" description="Protein kinase" evidence="2">
    <location>
        <begin position="768"/>
        <end position="1045"/>
    </location>
</feature>
<feature type="region of interest" description="Disordered" evidence="3">
    <location>
        <begin position="696"/>
        <end position="733"/>
    </location>
</feature>
<feature type="compositionally biased region" description="Low complexity" evidence="3">
    <location>
        <begin position="716"/>
        <end position="733"/>
    </location>
</feature>
<feature type="binding site" evidence="2">
    <location>
        <begin position="774"/>
        <end position="782"/>
    </location>
    <ligand>
        <name>ATP</name>
        <dbReference type="ChEBI" id="CHEBI:30616"/>
    </ligand>
</feature>
<feature type="binding site" evidence="2">
    <location>
        <position position="796"/>
    </location>
    <ligand>
        <name>ATP</name>
        <dbReference type="ChEBI" id="CHEBI:30616"/>
    </ligand>
</feature>
<feature type="modified residue" description="Phosphoserine" evidence="6 7">
    <location>
        <position position="744"/>
    </location>
</feature>
<feature type="splice variant" id="VSP_034563" description="In isoform 2." evidence="4">
    <location>
        <begin position="264"/>
        <end position="311"/>
    </location>
</feature>
<feature type="sequence conflict" description="In Ref. 3; AAL47484." evidence="5" ref="3">
    <original>SSSGG</original>
    <variation>CCSED</variation>
    <location>
        <begin position="720"/>
        <end position="724"/>
    </location>
</feature>
<feature type="sequence conflict" description="In Ref. 3; AAL47484." evidence="5" ref="3">
    <original>P</original>
    <variation>H</variation>
    <location>
        <position position="737"/>
    </location>
</feature>
<comment type="interaction">
    <interactant intactId="EBI-16945916">
        <id>Q0WR59</id>
    </interactant>
    <interactant intactId="EBI-20651541">
        <id>C0LGJ9</id>
        <label>At2g02780</label>
    </interactant>
    <organismsDiffer>false</organismsDiffer>
    <experiments>2</experiments>
</comment>
<comment type="interaction">
    <interactant intactId="EBI-16945916">
        <id>Q0WR59</id>
    </interactant>
    <interactant intactId="EBI-16946048">
        <id>C0LGL4</id>
        <label>At2g28960</label>
    </interactant>
    <organismsDiffer>false</organismsDiffer>
    <experiments>2</experiments>
</comment>
<comment type="interaction">
    <interactant intactId="EBI-16945916">
        <id>Q0WR59</id>
    </interactant>
    <interactant intactId="EBI-6299033">
        <id>Q9XIC7</id>
        <label>SERK2</label>
    </interactant>
    <organismsDiffer>false</organismsDiffer>
    <experiments>3</experiments>
</comment>
<comment type="subcellular location">
    <subcellularLocation>
        <location evidence="5">Membrane</location>
        <topology evidence="5">Single-pass membrane protein</topology>
    </subcellularLocation>
</comment>
<comment type="alternative products">
    <event type="alternative splicing"/>
    <isoform>
        <id>Q0WR59-1</id>
        <name>1</name>
        <sequence type="displayed"/>
    </isoform>
    <isoform>
        <id>Q0WR59-2</id>
        <name>2</name>
        <sequence type="described" ref="VSP_034563"/>
    </isoform>
</comment>
<comment type="domain">
    <text>The protein kinase domain is predicted to be catalytically inactive.</text>
</comment>
<comment type="similarity">
    <text evidence="5">Belongs to the protein kinase superfamily.</text>
</comment>
<evidence type="ECO:0000255" key="1"/>
<evidence type="ECO:0000255" key="2">
    <source>
        <dbReference type="PROSITE-ProRule" id="PRU00159"/>
    </source>
</evidence>
<evidence type="ECO:0000256" key="3">
    <source>
        <dbReference type="SAM" id="MobiDB-lite"/>
    </source>
</evidence>
<evidence type="ECO:0000303" key="4">
    <source ref="4"/>
</evidence>
<evidence type="ECO:0000305" key="5"/>
<evidence type="ECO:0007744" key="6">
    <source>
    </source>
</evidence>
<evidence type="ECO:0007744" key="7">
    <source>
    </source>
</evidence>
<sequence>MSHFLTFCFLSLLLLLHGANAVTETELRSLLEFRKGIRDETSHQRISWSDTSSLTDPSTCPNDWPGISCDPETGSIIAINLDRRGLSGELKFSTLSGLTRLRNLSLSGNSFSGRVVPSLGGISSLQHLDLSDNGFYGPIPGRISELWSLNHLNLSSNKFEGGFPSGFRNLQQLRSLDLHKNEIWGDVGEIFTELKNVEFVDLSCNRFNGGLSLPMENISSISNTLRHLNLSHNALNGKFFSEESIGSFKNLEIVDLENNQINGELPHFGSQPSLRILKLARNELFGLVPQELLQSSIPLLELDLSRNGFTGSISEINSSTLTMLNLSSNGLSGDLPSSFKSCSVIDLSGNTFSGDVSVVQKWEATPDVLDLSSNNLSGSLPNFTSAFSRLSVLSIRNNSVSGSLPSLWGDSQFSVIDLSSNKFSGFIPVSFFTFASLRSLNLSRNNLEGPIPFRGSRASELLVLNSYPQMELLDLSTNSLTGMLPGDIGTMEKIKVLNLANNKLSGELPSDLNKLSGLLFLDLSNNTFKGQIPNKLPSQMVGFNVSYNDLSGIIPEDLRSYPPSSFYPGNSKLSLPGRIPADSSGDLSLPGKKHHSKLSIRIAIIVASVGAAIMILFVLFAYHRTQLKDFHGRNRFTDQATTRDTKFGRSSRPSLFNFSSNVEQQSSSLSFSNDHLLTANSRSLSGIPGCEAEISEQGAPATSAPTNLLDDYPAASGRKSSSGGSPLSSSPRFSDQPVMLDVYSPDRLAGELFFLDVSLKLTAEELSRAPAEVLGRSSHGTLYKATLDNGHMLTVKWLRVGLVRHKKDFAREAKKIGSLKHPNIVPLRAYYWGPREQERLLLSDYLRGESLAMHLYETTPRRYSPMSFSQRLKVAVEVAQCLLYLHDRAMPHGNLKPTNIILSSPDNTVRITDYCVHRLMTPSGVAEQILNMSALGYSAPELSSASKPIPTLKSDVYAFGVILMELLTRRSAGDIISGQTGAVDLTDWVRLCDQEGRRMDCIDRDIAGGEEFSKGMEDALAVAIRCILSVNERPNIRQVLDHLTSISA</sequence>
<name>Y5020_ARATH</name>